<proteinExistence type="evidence at transcript level"/>
<protein>
    <recommendedName>
        <fullName>UV excision repair protein RAD23 homolog A</fullName>
    </recommendedName>
</protein>
<sequence>MAVTITLKTLQQQTFKIRMEPDETVKVLKEKIEAEKGRDAFPVAGQKLIYAGKILSDDVPIRDYRIDEKNFVVVMVTKAKTSPGTSVPSEASPTATPESSTSFPSAPASGMSHPPPTAREDKSPSEESAPTTSPESVSGSVPSSGSGGREEDAASTLVTGSEYETMLTEIMSMGYERERVVAALRASYNNPHRAVEYLLTGIPGSPEPEHGSVQESQVSEQPSTEAGENPLEFLRDQPQFQNMRQVIQQNPALLPALLQQLGQENPQLLQQISRHQEQFIQMLNEPPGELVDISDVEGEVGAIGEEAPQMNYIQVTPQEKEAIERLKALGFPESLVIQAYFACEKNENLAANFLLSQNFDDE</sequence>
<keyword id="KW-0227">DNA damage</keyword>
<keyword id="KW-0234">DNA repair</keyword>
<keyword id="KW-1017">Isopeptide bond</keyword>
<keyword id="KW-0539">Nucleus</keyword>
<keyword id="KW-0597">Phosphoprotein</keyword>
<keyword id="KW-0647">Proteasome</keyword>
<keyword id="KW-1185">Reference proteome</keyword>
<keyword id="KW-0677">Repeat</keyword>
<keyword id="KW-0832">Ubl conjugation</keyword>
<organism>
    <name type="scientific">Bos taurus</name>
    <name type="common">Bovine</name>
    <dbReference type="NCBI Taxonomy" id="9913"/>
    <lineage>
        <taxon>Eukaryota</taxon>
        <taxon>Metazoa</taxon>
        <taxon>Chordata</taxon>
        <taxon>Craniata</taxon>
        <taxon>Vertebrata</taxon>
        <taxon>Euteleostomi</taxon>
        <taxon>Mammalia</taxon>
        <taxon>Eutheria</taxon>
        <taxon>Laurasiatheria</taxon>
        <taxon>Artiodactyla</taxon>
        <taxon>Ruminantia</taxon>
        <taxon>Pecora</taxon>
        <taxon>Bovidae</taxon>
        <taxon>Bovinae</taxon>
        <taxon>Bos</taxon>
    </lineage>
</organism>
<reference key="1">
    <citation type="submission" date="2007-02" db="EMBL/GenBank/DDBJ databases">
        <authorList>
            <consortium name="NIH - Mammalian Gene Collection (MGC) project"/>
        </authorList>
    </citation>
    <scope>NUCLEOTIDE SEQUENCE [LARGE SCALE MRNA]</scope>
    <source>
        <strain>Hereford</strain>
        <tissue>Fetal muscle</tissue>
    </source>
</reference>
<feature type="chain" id="PRO_0000327862" description="UV excision repair protein RAD23 homolog A">
    <location>
        <begin position="1"/>
        <end position="362"/>
    </location>
</feature>
<feature type="domain" description="Ubiquitin-like" evidence="5">
    <location>
        <begin position="1"/>
        <end position="81"/>
    </location>
</feature>
<feature type="domain" description="UBA 1" evidence="4">
    <location>
        <begin position="161"/>
        <end position="201"/>
    </location>
</feature>
<feature type="domain" description="UBA 2" evidence="4">
    <location>
        <begin position="317"/>
        <end position="357"/>
    </location>
</feature>
<feature type="region of interest" description="Disordered" evidence="6">
    <location>
        <begin position="80"/>
        <end position="160"/>
    </location>
</feature>
<feature type="region of interest" description="Disordered" evidence="6">
    <location>
        <begin position="201"/>
        <end position="227"/>
    </location>
</feature>
<feature type="compositionally biased region" description="Low complexity" evidence="6">
    <location>
        <begin position="88"/>
        <end position="109"/>
    </location>
</feature>
<feature type="compositionally biased region" description="Low complexity" evidence="6">
    <location>
        <begin position="126"/>
        <end position="144"/>
    </location>
</feature>
<feature type="modified residue" description="Phosphoserine" evidence="2">
    <location>
        <position position="123"/>
    </location>
</feature>
<feature type="modified residue" description="Phosphoserine" evidence="2">
    <location>
        <position position="128"/>
    </location>
</feature>
<feature type="modified residue" description="Phosphoserine" evidence="2">
    <location>
        <position position="133"/>
    </location>
</feature>
<feature type="modified residue" description="Phosphoserine" evidence="2">
    <location>
        <position position="136"/>
    </location>
</feature>
<feature type="modified residue" description="Phosphoserine" evidence="3">
    <location>
        <position position="138"/>
    </location>
</feature>
<feature type="modified residue" description="Phosphoserine" evidence="2">
    <location>
        <position position="205"/>
    </location>
</feature>
<feature type="modified residue" description="Phosphoserine" evidence="2">
    <location>
        <position position="294"/>
    </location>
</feature>
<feature type="modified residue" description="Phosphoserine" evidence="2">
    <location>
        <position position="356"/>
    </location>
</feature>
<feature type="cross-link" description="Glycyl lysine isopeptide (Lys-Gly) (interchain with G-Cter in ubiquitin)" evidence="2">
    <location>
        <position position="122"/>
    </location>
</feature>
<gene>
    <name type="primary">RAD23A</name>
</gene>
<evidence type="ECO:0000250" key="1"/>
<evidence type="ECO:0000250" key="2">
    <source>
        <dbReference type="UniProtKB" id="P54725"/>
    </source>
</evidence>
<evidence type="ECO:0000250" key="3">
    <source>
        <dbReference type="UniProtKB" id="P54726"/>
    </source>
</evidence>
<evidence type="ECO:0000255" key="4">
    <source>
        <dbReference type="PROSITE-ProRule" id="PRU00212"/>
    </source>
</evidence>
<evidence type="ECO:0000255" key="5">
    <source>
        <dbReference type="PROSITE-ProRule" id="PRU00214"/>
    </source>
</evidence>
<evidence type="ECO:0000256" key="6">
    <source>
        <dbReference type="SAM" id="MobiDB-lite"/>
    </source>
</evidence>
<evidence type="ECO:0000305" key="7"/>
<name>RD23A_BOVIN</name>
<accession>A3KMV2</accession>
<comment type="function">
    <text evidence="1">Multiubiquitin chain receptor involved in modulation of proteasomal degradation. Binds to 'Lys-48'-linked polyubiquitin chains in a length-dependent manner and with a lower affinity to 'Lys-63'-linked polyubiquitin chains. Proposed to be capable to bind simultaneously to the 26S proteasome and to polyubiquitinated substrates and to deliver ubiquitinated proteins to the proteasome (By similarity).</text>
</comment>
<comment type="function">
    <text evidence="1">Involved in nucleotide excision repair and is thought to be functional equivalent for RAD23B in global genome nucleotide excision repair (GG-NER) by association with XPC. In vitro, XPC:RAD23A dimer has NER activity. Can stabilize XPC (By similarity).</text>
</comment>
<comment type="subunit">
    <text evidence="1">Interacts with XPC; the interaction is suggesting the existence of a functional equivalent variant XPC complex. Interacts with PSMD4 and PSMC5. Interacts with ATXN3. Interacts with UBQLN2 (By similarity).</text>
</comment>
<comment type="subcellular location">
    <subcellularLocation>
        <location evidence="7">Nucleus</location>
    </subcellularLocation>
</comment>
<comment type="domain">
    <text evidence="1">The ubiquitin-like (UBL) and the UBA (ubiquitin-associated) domains interact intramolecularly in a highly dynamic manner, as each UBA domain competes for an overlapping UBL domain surface. Binding of ubiquitin or proteasome subunit PSMD4 disrupt the UBL-UBA domain interactions and drive RAD23A in to an open conformation (By similarity).</text>
</comment>
<comment type="similarity">
    <text evidence="7">Belongs to the RAD23 family.</text>
</comment>
<dbReference type="EMBL" id="BC133282">
    <property type="protein sequence ID" value="AAI33283.1"/>
    <property type="molecule type" value="mRNA"/>
</dbReference>
<dbReference type="RefSeq" id="NP_001076083.1">
    <property type="nucleotide sequence ID" value="NM_001082614.1"/>
</dbReference>
<dbReference type="BMRB" id="A3KMV2"/>
<dbReference type="SMR" id="A3KMV2"/>
<dbReference type="FunCoup" id="A3KMV2">
    <property type="interactions" value="3371"/>
</dbReference>
<dbReference type="STRING" id="9913.ENSBTAP00000020113"/>
<dbReference type="PaxDb" id="9913-ENSBTAP00000020113"/>
<dbReference type="PeptideAtlas" id="A3KMV2"/>
<dbReference type="GeneID" id="540564"/>
<dbReference type="KEGG" id="bta:540564"/>
<dbReference type="CTD" id="5886"/>
<dbReference type="VEuPathDB" id="HostDB:ENSBTAG00000015116"/>
<dbReference type="eggNOG" id="KOG0011">
    <property type="taxonomic scope" value="Eukaryota"/>
</dbReference>
<dbReference type="HOGENOM" id="CLU_040364_0_1_1"/>
<dbReference type="InParanoid" id="A3KMV2"/>
<dbReference type="OMA" id="VACCVRI"/>
<dbReference type="OrthoDB" id="419317at2759"/>
<dbReference type="TreeFam" id="TF101216"/>
<dbReference type="Reactome" id="R-BTA-5689877">
    <property type="pathway name" value="Josephin domain DUBs"/>
</dbReference>
<dbReference type="Reactome" id="R-BTA-5696394">
    <property type="pathway name" value="DNA Damage Recognition in GG-NER"/>
</dbReference>
<dbReference type="Reactome" id="R-BTA-5696395">
    <property type="pathway name" value="Formation of Incision Complex in GG-NER"/>
</dbReference>
<dbReference type="Proteomes" id="UP000009136">
    <property type="component" value="Chromosome 7"/>
</dbReference>
<dbReference type="Bgee" id="ENSBTAG00000015116">
    <property type="expression patterns" value="Expressed in biceps femoris and 107 other cell types or tissues"/>
</dbReference>
<dbReference type="GO" id="GO:0005829">
    <property type="term" value="C:cytosol"/>
    <property type="evidence" value="ECO:0000318"/>
    <property type="project" value="GO_Central"/>
</dbReference>
<dbReference type="GO" id="GO:0005654">
    <property type="term" value="C:nucleoplasm"/>
    <property type="evidence" value="ECO:0000318"/>
    <property type="project" value="GO_Central"/>
</dbReference>
<dbReference type="GO" id="GO:0000502">
    <property type="term" value="C:proteasome complex"/>
    <property type="evidence" value="ECO:0007669"/>
    <property type="project" value="UniProtKB-KW"/>
</dbReference>
<dbReference type="GO" id="GO:0003684">
    <property type="term" value="F:damaged DNA binding"/>
    <property type="evidence" value="ECO:0007669"/>
    <property type="project" value="InterPro"/>
</dbReference>
<dbReference type="GO" id="GO:0031593">
    <property type="term" value="F:polyubiquitin modification-dependent protein binding"/>
    <property type="evidence" value="ECO:0000318"/>
    <property type="project" value="GO_Central"/>
</dbReference>
<dbReference type="GO" id="GO:0070628">
    <property type="term" value="F:proteasome binding"/>
    <property type="evidence" value="ECO:0000318"/>
    <property type="project" value="GO_Central"/>
</dbReference>
<dbReference type="GO" id="GO:0043130">
    <property type="term" value="F:ubiquitin binding"/>
    <property type="evidence" value="ECO:0000318"/>
    <property type="project" value="GO_Central"/>
</dbReference>
<dbReference type="GO" id="GO:0006289">
    <property type="term" value="P:nucleotide-excision repair"/>
    <property type="evidence" value="ECO:0007669"/>
    <property type="project" value="InterPro"/>
</dbReference>
<dbReference type="GO" id="GO:0043161">
    <property type="term" value="P:proteasome-mediated ubiquitin-dependent protein catabolic process"/>
    <property type="evidence" value="ECO:0000318"/>
    <property type="project" value="GO_Central"/>
</dbReference>
<dbReference type="CDD" id="cd14377">
    <property type="entry name" value="UBA1_Rad23"/>
    <property type="match status" value="1"/>
</dbReference>
<dbReference type="CDD" id="cd14427">
    <property type="entry name" value="UBA2_HR23A"/>
    <property type="match status" value="1"/>
</dbReference>
<dbReference type="CDD" id="cd17126">
    <property type="entry name" value="Ubl_HR23A"/>
    <property type="match status" value="1"/>
</dbReference>
<dbReference type="FunFam" id="1.10.10.540:FF:000001">
    <property type="entry name" value="UV excision repair protein RAD23 B"/>
    <property type="match status" value="1"/>
</dbReference>
<dbReference type="FunFam" id="1.10.8.10:FF:000002">
    <property type="entry name" value="UV excision repair protein RAD23 homolog"/>
    <property type="match status" value="1"/>
</dbReference>
<dbReference type="FunFam" id="1.10.8.10:FF:000003">
    <property type="entry name" value="UV excision repair protein RAD23 homolog"/>
    <property type="match status" value="1"/>
</dbReference>
<dbReference type="FunFam" id="3.10.20.90:FF:000053">
    <property type="entry name" value="UV excision repair protein RAD23 homolog A"/>
    <property type="match status" value="1"/>
</dbReference>
<dbReference type="Gene3D" id="1.10.8.10">
    <property type="entry name" value="DNA helicase RuvA subunit, C-terminal domain"/>
    <property type="match status" value="2"/>
</dbReference>
<dbReference type="Gene3D" id="3.10.20.90">
    <property type="entry name" value="Phosphatidylinositol 3-kinase Catalytic Subunit, Chain A, domain 1"/>
    <property type="match status" value="1"/>
</dbReference>
<dbReference type="Gene3D" id="1.10.10.540">
    <property type="entry name" value="XPC-binding domain"/>
    <property type="match status" value="1"/>
</dbReference>
<dbReference type="InterPro" id="IPR004806">
    <property type="entry name" value="Rad23"/>
</dbReference>
<dbReference type="InterPro" id="IPR041811">
    <property type="entry name" value="RAD23A/B_UBA1"/>
</dbReference>
<dbReference type="InterPro" id="IPR006636">
    <property type="entry name" value="STI1_HS-bd"/>
</dbReference>
<dbReference type="InterPro" id="IPR015940">
    <property type="entry name" value="UBA"/>
</dbReference>
<dbReference type="InterPro" id="IPR009060">
    <property type="entry name" value="UBA-like_sf"/>
</dbReference>
<dbReference type="InterPro" id="IPR000626">
    <property type="entry name" value="Ubiquitin-like_dom"/>
</dbReference>
<dbReference type="InterPro" id="IPR029071">
    <property type="entry name" value="Ubiquitin-like_domsf"/>
</dbReference>
<dbReference type="InterPro" id="IPR015360">
    <property type="entry name" value="XPC-bd"/>
</dbReference>
<dbReference type="InterPro" id="IPR036353">
    <property type="entry name" value="XPC-bd_sf"/>
</dbReference>
<dbReference type="NCBIfam" id="TIGR00601">
    <property type="entry name" value="rad23"/>
    <property type="match status" value="1"/>
</dbReference>
<dbReference type="PANTHER" id="PTHR10621">
    <property type="entry name" value="UV EXCISION REPAIR PROTEIN RAD23"/>
    <property type="match status" value="1"/>
</dbReference>
<dbReference type="PANTHER" id="PTHR10621:SF29">
    <property type="entry name" value="UV EXCISION REPAIR PROTEIN RAD23 HOMOLOG A"/>
    <property type="match status" value="1"/>
</dbReference>
<dbReference type="Pfam" id="PF00627">
    <property type="entry name" value="UBA"/>
    <property type="match status" value="2"/>
</dbReference>
<dbReference type="Pfam" id="PF00240">
    <property type="entry name" value="ubiquitin"/>
    <property type="match status" value="1"/>
</dbReference>
<dbReference type="Pfam" id="PF09280">
    <property type="entry name" value="XPC-binding"/>
    <property type="match status" value="1"/>
</dbReference>
<dbReference type="PRINTS" id="PR01839">
    <property type="entry name" value="RAD23PROTEIN"/>
</dbReference>
<dbReference type="SMART" id="SM00727">
    <property type="entry name" value="STI1"/>
    <property type="match status" value="1"/>
</dbReference>
<dbReference type="SMART" id="SM00165">
    <property type="entry name" value="UBA"/>
    <property type="match status" value="2"/>
</dbReference>
<dbReference type="SMART" id="SM00213">
    <property type="entry name" value="UBQ"/>
    <property type="match status" value="1"/>
</dbReference>
<dbReference type="SUPFAM" id="SSF46934">
    <property type="entry name" value="UBA-like"/>
    <property type="match status" value="2"/>
</dbReference>
<dbReference type="SUPFAM" id="SSF54236">
    <property type="entry name" value="Ubiquitin-like"/>
    <property type="match status" value="1"/>
</dbReference>
<dbReference type="SUPFAM" id="SSF101238">
    <property type="entry name" value="XPC-binding domain"/>
    <property type="match status" value="1"/>
</dbReference>
<dbReference type="PROSITE" id="PS50030">
    <property type="entry name" value="UBA"/>
    <property type="match status" value="2"/>
</dbReference>
<dbReference type="PROSITE" id="PS50053">
    <property type="entry name" value="UBIQUITIN_2"/>
    <property type="match status" value="1"/>
</dbReference>